<name>RS14Z_PELPD</name>
<proteinExistence type="inferred from homology"/>
<evidence type="ECO:0000255" key="1">
    <source>
        <dbReference type="HAMAP-Rule" id="MF_01364"/>
    </source>
</evidence>
<evidence type="ECO:0000305" key="2"/>
<sequence>MAKVSMIIKSQRKPKFKVQQHNRCEVCGRPKAFYRKFRMCRICLRKYASIGQIPGVIKSSW</sequence>
<reference key="1">
    <citation type="submission" date="2006-10" db="EMBL/GenBank/DDBJ databases">
        <title>Complete sequence of chromosome of Pelobacter propionicus DSM 2379.</title>
        <authorList>
            <consortium name="US DOE Joint Genome Institute"/>
            <person name="Copeland A."/>
            <person name="Lucas S."/>
            <person name="Lapidus A."/>
            <person name="Barry K."/>
            <person name="Detter J.C."/>
            <person name="Glavina del Rio T."/>
            <person name="Hammon N."/>
            <person name="Israni S."/>
            <person name="Dalin E."/>
            <person name="Tice H."/>
            <person name="Pitluck S."/>
            <person name="Saunders E."/>
            <person name="Brettin T."/>
            <person name="Bruce D."/>
            <person name="Han C."/>
            <person name="Tapia R."/>
            <person name="Schmutz J."/>
            <person name="Larimer F."/>
            <person name="Land M."/>
            <person name="Hauser L."/>
            <person name="Kyrpides N."/>
            <person name="Kim E."/>
            <person name="Lovley D."/>
            <person name="Richardson P."/>
        </authorList>
    </citation>
    <scope>NUCLEOTIDE SEQUENCE [LARGE SCALE GENOMIC DNA]</scope>
    <source>
        <strain>DSM 2379 / NBRC 103807 / OttBd1</strain>
    </source>
</reference>
<organism>
    <name type="scientific">Pelobacter propionicus (strain DSM 2379 / NBRC 103807 / OttBd1)</name>
    <dbReference type="NCBI Taxonomy" id="338966"/>
    <lineage>
        <taxon>Bacteria</taxon>
        <taxon>Pseudomonadati</taxon>
        <taxon>Thermodesulfobacteriota</taxon>
        <taxon>Desulfuromonadia</taxon>
        <taxon>Desulfuromonadales</taxon>
        <taxon>Desulfuromonadaceae</taxon>
        <taxon>Pelobacter</taxon>
    </lineage>
</organism>
<feature type="chain" id="PRO_1000067962" description="Small ribosomal subunit protein uS14">
    <location>
        <begin position="1"/>
        <end position="61"/>
    </location>
</feature>
<feature type="binding site" evidence="1">
    <location>
        <position position="24"/>
    </location>
    <ligand>
        <name>Zn(2+)</name>
        <dbReference type="ChEBI" id="CHEBI:29105"/>
    </ligand>
</feature>
<feature type="binding site" evidence="1">
    <location>
        <position position="27"/>
    </location>
    <ligand>
        <name>Zn(2+)</name>
        <dbReference type="ChEBI" id="CHEBI:29105"/>
    </ligand>
</feature>
<feature type="binding site" evidence="1">
    <location>
        <position position="40"/>
    </location>
    <ligand>
        <name>Zn(2+)</name>
        <dbReference type="ChEBI" id="CHEBI:29105"/>
    </ligand>
</feature>
<feature type="binding site" evidence="1">
    <location>
        <position position="43"/>
    </location>
    <ligand>
        <name>Zn(2+)</name>
        <dbReference type="ChEBI" id="CHEBI:29105"/>
    </ligand>
</feature>
<accession>A1ALV4</accession>
<dbReference type="EMBL" id="CP000482">
    <property type="protein sequence ID" value="ABK98324.1"/>
    <property type="molecule type" value="Genomic_DNA"/>
</dbReference>
<dbReference type="RefSeq" id="WP_011734636.1">
    <property type="nucleotide sequence ID" value="NC_008609.1"/>
</dbReference>
<dbReference type="SMR" id="A1ALV4"/>
<dbReference type="STRING" id="338966.Ppro_0693"/>
<dbReference type="KEGG" id="ppd:Ppro_0693"/>
<dbReference type="eggNOG" id="COG0199">
    <property type="taxonomic scope" value="Bacteria"/>
</dbReference>
<dbReference type="HOGENOM" id="CLU_139869_3_0_7"/>
<dbReference type="OrthoDB" id="9810484at2"/>
<dbReference type="Proteomes" id="UP000006732">
    <property type="component" value="Chromosome"/>
</dbReference>
<dbReference type="GO" id="GO:0005737">
    <property type="term" value="C:cytoplasm"/>
    <property type="evidence" value="ECO:0007669"/>
    <property type="project" value="UniProtKB-ARBA"/>
</dbReference>
<dbReference type="GO" id="GO:0015935">
    <property type="term" value="C:small ribosomal subunit"/>
    <property type="evidence" value="ECO:0007669"/>
    <property type="project" value="TreeGrafter"/>
</dbReference>
<dbReference type="GO" id="GO:0019843">
    <property type="term" value="F:rRNA binding"/>
    <property type="evidence" value="ECO:0007669"/>
    <property type="project" value="UniProtKB-UniRule"/>
</dbReference>
<dbReference type="GO" id="GO:0003735">
    <property type="term" value="F:structural constituent of ribosome"/>
    <property type="evidence" value="ECO:0007669"/>
    <property type="project" value="InterPro"/>
</dbReference>
<dbReference type="GO" id="GO:0008270">
    <property type="term" value="F:zinc ion binding"/>
    <property type="evidence" value="ECO:0007669"/>
    <property type="project" value="UniProtKB-UniRule"/>
</dbReference>
<dbReference type="GO" id="GO:0006412">
    <property type="term" value="P:translation"/>
    <property type="evidence" value="ECO:0007669"/>
    <property type="project" value="UniProtKB-UniRule"/>
</dbReference>
<dbReference type="FunFam" id="4.10.830.10:FF:000001">
    <property type="entry name" value="30S ribosomal protein S14 type Z"/>
    <property type="match status" value="1"/>
</dbReference>
<dbReference type="Gene3D" id="4.10.830.10">
    <property type="entry name" value="30s Ribosomal Protein S14, Chain N"/>
    <property type="match status" value="1"/>
</dbReference>
<dbReference type="HAMAP" id="MF_01364_B">
    <property type="entry name" value="Ribosomal_uS14_2_B"/>
    <property type="match status" value="1"/>
</dbReference>
<dbReference type="InterPro" id="IPR001209">
    <property type="entry name" value="Ribosomal_uS14"/>
</dbReference>
<dbReference type="InterPro" id="IPR023053">
    <property type="entry name" value="Ribosomal_uS14_bact"/>
</dbReference>
<dbReference type="InterPro" id="IPR018271">
    <property type="entry name" value="Ribosomal_uS14_CS"/>
</dbReference>
<dbReference type="InterPro" id="IPR043140">
    <property type="entry name" value="Ribosomal_uS14_sf"/>
</dbReference>
<dbReference type="NCBIfam" id="NF005974">
    <property type="entry name" value="PRK08061.1"/>
    <property type="match status" value="1"/>
</dbReference>
<dbReference type="PANTHER" id="PTHR19836">
    <property type="entry name" value="30S RIBOSOMAL PROTEIN S14"/>
    <property type="match status" value="1"/>
</dbReference>
<dbReference type="PANTHER" id="PTHR19836:SF19">
    <property type="entry name" value="SMALL RIBOSOMAL SUBUNIT PROTEIN US14M"/>
    <property type="match status" value="1"/>
</dbReference>
<dbReference type="Pfam" id="PF00253">
    <property type="entry name" value="Ribosomal_S14"/>
    <property type="match status" value="1"/>
</dbReference>
<dbReference type="SUPFAM" id="SSF57716">
    <property type="entry name" value="Glucocorticoid receptor-like (DNA-binding domain)"/>
    <property type="match status" value="1"/>
</dbReference>
<dbReference type="PROSITE" id="PS00527">
    <property type="entry name" value="RIBOSOMAL_S14"/>
    <property type="match status" value="1"/>
</dbReference>
<keyword id="KW-0479">Metal-binding</keyword>
<keyword id="KW-1185">Reference proteome</keyword>
<keyword id="KW-0687">Ribonucleoprotein</keyword>
<keyword id="KW-0689">Ribosomal protein</keyword>
<keyword id="KW-0694">RNA-binding</keyword>
<keyword id="KW-0699">rRNA-binding</keyword>
<keyword id="KW-0862">Zinc</keyword>
<gene>
    <name evidence="1" type="primary">rpsZ</name>
    <name evidence="1" type="synonym">rpsN</name>
    <name type="ordered locus">Ppro_0693</name>
</gene>
<protein>
    <recommendedName>
        <fullName evidence="1">Small ribosomal subunit protein uS14</fullName>
    </recommendedName>
    <alternativeName>
        <fullName evidence="2">30S ribosomal protein S14 type Z</fullName>
    </alternativeName>
</protein>
<comment type="function">
    <text evidence="1">Binds 16S rRNA, required for the assembly of 30S particles and may also be responsible for determining the conformation of the 16S rRNA at the A site.</text>
</comment>
<comment type="cofactor">
    <cofactor evidence="1">
        <name>Zn(2+)</name>
        <dbReference type="ChEBI" id="CHEBI:29105"/>
    </cofactor>
    <text evidence="1">Binds 1 zinc ion per subunit.</text>
</comment>
<comment type="subunit">
    <text evidence="1">Part of the 30S ribosomal subunit. Contacts proteins S3 and S10.</text>
</comment>
<comment type="similarity">
    <text evidence="1">Belongs to the universal ribosomal protein uS14 family. Zinc-binding uS14 subfamily.</text>
</comment>